<sequence>MSEKIRVLLYYKYVSIENAQEYAAKHLEFCKSIGLKGRILIADEGINGTVSGDYETTQKYMDWVHSDERFADLWFKIDEENQQAFRKMFVRYKKEIVHLGLEDNNFDSDINPLETTGEYLNPKQFKEALLDEDTVVLDTRNDYEYDLGHFRGAIRPDIRNFRELPQWVRDNKDKFMEKRVVVYCTGGVRCEKFSGWLVREGFKDVGQLHGGIATYGKDPEVQGELWDGAMYVFDDRISVPINHVNPTVISKDYFDGTPCERYVNCANPFCNKQIFASEENETKYVRGCSPECRAHERNRYVQENGLSRQEWAERLEAIGESLPEFVGA</sequence>
<dbReference type="EC" id="1.14.-.-" evidence="1"/>
<dbReference type="EMBL" id="CP000259">
    <property type="protein sequence ID" value="ABF31961.1"/>
    <property type="molecule type" value="Genomic_DNA"/>
</dbReference>
<dbReference type="RefSeq" id="WP_002990124.1">
    <property type="nucleotide sequence ID" value="NC_008021.1"/>
</dbReference>
<dbReference type="SMR" id="Q1JM51"/>
<dbReference type="KEGG" id="spk:MGAS9429_Spy0773"/>
<dbReference type="HOGENOM" id="CLU_038878_1_0_9"/>
<dbReference type="Proteomes" id="UP000002433">
    <property type="component" value="Chromosome"/>
</dbReference>
<dbReference type="GO" id="GO:0016705">
    <property type="term" value="F:oxidoreductase activity, acting on paired donors, with incorporation or reduction of molecular oxygen"/>
    <property type="evidence" value="ECO:0007669"/>
    <property type="project" value="UniProtKB-UniRule"/>
</dbReference>
<dbReference type="GO" id="GO:0006400">
    <property type="term" value="P:tRNA modification"/>
    <property type="evidence" value="ECO:0007669"/>
    <property type="project" value="UniProtKB-UniRule"/>
</dbReference>
<dbReference type="CDD" id="cd01518">
    <property type="entry name" value="RHOD_YceA"/>
    <property type="match status" value="1"/>
</dbReference>
<dbReference type="Gene3D" id="3.30.70.100">
    <property type="match status" value="1"/>
</dbReference>
<dbReference type="Gene3D" id="3.40.250.10">
    <property type="entry name" value="Rhodanese-like domain"/>
    <property type="match status" value="1"/>
</dbReference>
<dbReference type="HAMAP" id="MF_00469">
    <property type="entry name" value="TrhO"/>
    <property type="match status" value="1"/>
</dbReference>
<dbReference type="InterPro" id="IPR001763">
    <property type="entry name" value="Rhodanese-like_dom"/>
</dbReference>
<dbReference type="InterPro" id="IPR036873">
    <property type="entry name" value="Rhodanese-like_dom_sf"/>
</dbReference>
<dbReference type="InterPro" id="IPR022111">
    <property type="entry name" value="Rhodanese_C"/>
</dbReference>
<dbReference type="InterPro" id="IPR020936">
    <property type="entry name" value="TrhO"/>
</dbReference>
<dbReference type="InterPro" id="IPR040503">
    <property type="entry name" value="TRHO_N"/>
</dbReference>
<dbReference type="NCBIfam" id="NF001135">
    <property type="entry name" value="PRK00142.1-3"/>
    <property type="match status" value="1"/>
</dbReference>
<dbReference type="NCBIfam" id="NF001137">
    <property type="entry name" value="PRK00142.1-5"/>
    <property type="match status" value="1"/>
</dbReference>
<dbReference type="PANTHER" id="PTHR43268:SF3">
    <property type="entry name" value="RHODANESE-LIKE DOMAIN-CONTAINING PROTEIN 7-RELATED"/>
    <property type="match status" value="1"/>
</dbReference>
<dbReference type="PANTHER" id="PTHR43268">
    <property type="entry name" value="THIOSULFATE SULFURTRANSFERASE/RHODANESE-LIKE DOMAIN-CONTAINING PROTEIN 2"/>
    <property type="match status" value="1"/>
</dbReference>
<dbReference type="Pfam" id="PF00581">
    <property type="entry name" value="Rhodanese"/>
    <property type="match status" value="1"/>
</dbReference>
<dbReference type="Pfam" id="PF12368">
    <property type="entry name" value="Rhodanese_C"/>
    <property type="match status" value="1"/>
</dbReference>
<dbReference type="Pfam" id="PF17773">
    <property type="entry name" value="UPF0176_N"/>
    <property type="match status" value="1"/>
</dbReference>
<dbReference type="SMART" id="SM00450">
    <property type="entry name" value="RHOD"/>
    <property type="match status" value="1"/>
</dbReference>
<dbReference type="SUPFAM" id="SSF52821">
    <property type="entry name" value="Rhodanese/Cell cycle control phosphatase"/>
    <property type="match status" value="1"/>
</dbReference>
<dbReference type="PROSITE" id="PS50206">
    <property type="entry name" value="RHODANESE_3"/>
    <property type="match status" value="1"/>
</dbReference>
<reference key="1">
    <citation type="journal article" date="2006" name="Proc. Natl. Acad. Sci. U.S.A.">
        <title>Molecular genetic anatomy of inter- and intraserotype variation in the human bacterial pathogen group A Streptococcus.</title>
        <authorList>
            <person name="Beres S.B."/>
            <person name="Richter E.W."/>
            <person name="Nagiec M.J."/>
            <person name="Sumby P."/>
            <person name="Porcella S.F."/>
            <person name="DeLeo F.R."/>
            <person name="Musser J.M."/>
        </authorList>
    </citation>
    <scope>NUCLEOTIDE SEQUENCE [LARGE SCALE GENOMIC DNA]</scope>
    <source>
        <strain>MGAS9429</strain>
    </source>
</reference>
<proteinExistence type="inferred from homology"/>
<protein>
    <recommendedName>
        <fullName evidence="1">tRNA uridine(34) hydroxylase</fullName>
        <ecNumber evidence="1">1.14.-.-</ecNumber>
    </recommendedName>
    <alternativeName>
        <fullName evidence="1">tRNA hydroxylation protein O</fullName>
    </alternativeName>
</protein>
<evidence type="ECO:0000255" key="1">
    <source>
        <dbReference type="HAMAP-Rule" id="MF_00469"/>
    </source>
</evidence>
<name>TRHO_STRPC</name>
<organism>
    <name type="scientific">Streptococcus pyogenes serotype M12 (strain MGAS9429)</name>
    <dbReference type="NCBI Taxonomy" id="370551"/>
    <lineage>
        <taxon>Bacteria</taxon>
        <taxon>Bacillati</taxon>
        <taxon>Bacillota</taxon>
        <taxon>Bacilli</taxon>
        <taxon>Lactobacillales</taxon>
        <taxon>Streptococcaceae</taxon>
        <taxon>Streptococcus</taxon>
    </lineage>
</organism>
<accession>Q1JM51</accession>
<keyword id="KW-0560">Oxidoreductase</keyword>
<keyword id="KW-0819">tRNA processing</keyword>
<comment type="function">
    <text evidence="1">Catalyzes oxygen-dependent 5-hydroxyuridine (ho5U) modification at position 34 in tRNAs.</text>
</comment>
<comment type="catalytic activity">
    <reaction evidence="1">
        <text>uridine(34) in tRNA + AH2 + O2 = 5-hydroxyuridine(34) in tRNA + A + H2O</text>
        <dbReference type="Rhea" id="RHEA:64224"/>
        <dbReference type="Rhea" id="RHEA-COMP:11727"/>
        <dbReference type="Rhea" id="RHEA-COMP:13381"/>
        <dbReference type="ChEBI" id="CHEBI:13193"/>
        <dbReference type="ChEBI" id="CHEBI:15377"/>
        <dbReference type="ChEBI" id="CHEBI:15379"/>
        <dbReference type="ChEBI" id="CHEBI:17499"/>
        <dbReference type="ChEBI" id="CHEBI:65315"/>
        <dbReference type="ChEBI" id="CHEBI:136877"/>
    </reaction>
</comment>
<comment type="similarity">
    <text evidence="1">Belongs to the TrhO family.</text>
</comment>
<gene>
    <name evidence="1" type="primary">trhO</name>
    <name type="ordered locus">MGAS9429_Spy0773</name>
</gene>
<feature type="chain" id="PRO_1000013785" description="tRNA uridine(34) hydroxylase">
    <location>
        <begin position="1"/>
        <end position="328"/>
    </location>
</feature>
<feature type="domain" description="Rhodanese" evidence="1">
    <location>
        <begin position="130"/>
        <end position="224"/>
    </location>
</feature>
<feature type="active site" description="Cysteine persulfide intermediate" evidence="1">
    <location>
        <position position="184"/>
    </location>
</feature>